<proteinExistence type="inferred from homology"/>
<feature type="chain" id="PRO_0000373657" description="DNA-directed RNA polymerase RPB7 homolog">
    <location>
        <begin position="1"/>
        <end position="339"/>
    </location>
</feature>
<keyword id="KW-0240">DNA-directed RNA polymerase</keyword>
<keyword id="KW-0244">Early protein</keyword>
<keyword id="KW-1035">Host cytoplasm</keyword>
<keyword id="KW-0804">Transcription</keyword>
<keyword id="KW-1195">Viral transcription</keyword>
<keyword id="KW-0946">Virion</keyword>
<reference key="1">
    <citation type="submission" date="2003-03" db="EMBL/GenBank/DDBJ databases">
        <title>African swine fever virus genomes.</title>
        <authorList>
            <person name="Kutish G.F."/>
            <person name="Rock D.L."/>
        </authorList>
    </citation>
    <scope>NUCLEOTIDE SEQUENCE [LARGE SCALE GENOMIC DNA]</scope>
</reference>
<organismHost>
    <name type="scientific">Ornithodoros</name>
    <name type="common">relapsing fever ticks</name>
    <dbReference type="NCBI Taxonomy" id="6937"/>
</organismHost>
<organismHost>
    <name type="scientific">Phacochoerus aethiopicus</name>
    <name type="common">Warthog</name>
    <dbReference type="NCBI Taxonomy" id="85517"/>
</organismHost>
<organismHost>
    <name type="scientific">Phacochoerus africanus</name>
    <name type="common">Warthog</name>
    <dbReference type="NCBI Taxonomy" id="41426"/>
</organismHost>
<organismHost>
    <name type="scientific">Potamochoerus larvatus</name>
    <name type="common">Bushpig</name>
    <dbReference type="NCBI Taxonomy" id="273792"/>
</organismHost>
<organismHost>
    <name type="scientific">Sus scrofa</name>
    <name type="common">Pig</name>
    <dbReference type="NCBI Taxonomy" id="9823"/>
</organismHost>
<organism>
    <name type="scientific">African swine fever virus (isolate Warthog/Namibia/Wart80/1980)</name>
    <name type="common">ASFV</name>
    <dbReference type="NCBI Taxonomy" id="561444"/>
    <lineage>
        <taxon>Viruses</taxon>
        <taxon>Varidnaviria</taxon>
        <taxon>Bamfordvirae</taxon>
        <taxon>Nucleocytoviricota</taxon>
        <taxon>Pokkesviricetes</taxon>
        <taxon>Asfuvirales</taxon>
        <taxon>Asfarviridae</taxon>
        <taxon>Asfivirus</taxon>
        <taxon>African swine fever virus</taxon>
    </lineage>
</organism>
<sequence>MIDQKIFETTLNIDDPTNFCTNVEAHLLKELENIYVGKCFKNSFILNITGIIQRSPCFIMRTNNSGRGYMHVRFSALVSYLNAFDLIAAVKIIKNDSNIILGESLLTEPVTIVIPSSESQNNVAEVGQIVPVQLANSSVYYIPGRQQASATGSIFIPKHTFSVYHVQEELTQEQALNLTKLVNIIEMLLESRSKKDFKQICFFEKLYYTYSISSDEILDLKIWKGPKGKEMSRLKPCNVLSFLYDALKNKSSSLGFWARPPNLLKSSPLAYQQDQNSFNATELPIICSAEVMFVTLLKEIINYLQFMNDLCDTFNNEQLIKRHENIWMLIEQRKIGHDF</sequence>
<comment type="function">
    <text evidence="1">Component of the DNA-directed RNA polymerase (RNAP) that catalyzes the transcription in the cytoplasm of viral DNA into RNA using the four ribonucleoside triphosphates as substrates.</text>
</comment>
<comment type="subunit">
    <text evidence="2">Part of the viral DNA-directed RNA polymerase that consists of 8 polII-like subunits (RPB1, RPB2, RPB3, RPB5, RPB6, RPB7, RPB9, RPB10), a capping enzyme and a termination factor.</text>
</comment>
<comment type="subcellular location">
    <subcellularLocation>
        <location evidence="3">Host cytoplasm</location>
    </subcellularLocation>
    <subcellularLocation>
        <location evidence="2">Virion</location>
    </subcellularLocation>
    <text evidence="2">Found in association with viral nucleoid.</text>
</comment>
<comment type="induction">
    <text evidence="2">Expressed in the early phase of the viral replicative cycle.</text>
</comment>
<comment type="domain">
    <text evidence="2">Contains an extended C-terminus, with no homology to characterized proteins.</text>
</comment>
<comment type="similarity">
    <text evidence="3">Belongs to the Asfivirus DNA-directed RNA polymerase RPB7 homolog family.</text>
</comment>
<protein>
    <recommendedName>
        <fullName evidence="2">DNA-directed RNA polymerase RPB7 homolog</fullName>
        <shortName evidence="3">RPB7 homolog</shortName>
    </recommendedName>
</protein>
<gene>
    <name type="ordered locus">War-115</name>
</gene>
<dbReference type="EMBL" id="AY261366">
    <property type="status" value="NOT_ANNOTATED_CDS"/>
    <property type="molecule type" value="Genomic_DNA"/>
</dbReference>
<dbReference type="SMR" id="P0CAE9"/>
<dbReference type="Proteomes" id="UP000000858">
    <property type="component" value="Segment"/>
</dbReference>
<dbReference type="GO" id="GO:0000428">
    <property type="term" value="C:DNA-directed RNA polymerase complex"/>
    <property type="evidence" value="ECO:0007669"/>
    <property type="project" value="UniProtKB-KW"/>
</dbReference>
<dbReference type="GO" id="GO:0030430">
    <property type="term" value="C:host cell cytoplasm"/>
    <property type="evidence" value="ECO:0007669"/>
    <property type="project" value="UniProtKB-SubCell"/>
</dbReference>
<dbReference type="GO" id="GO:0044423">
    <property type="term" value="C:virion component"/>
    <property type="evidence" value="ECO:0007669"/>
    <property type="project" value="UniProtKB-KW"/>
</dbReference>
<dbReference type="GO" id="GO:0019083">
    <property type="term" value="P:viral transcription"/>
    <property type="evidence" value="ECO:0007669"/>
    <property type="project" value="UniProtKB-KW"/>
</dbReference>
<evidence type="ECO:0000250" key="1">
    <source>
        <dbReference type="UniProtKB" id="P62487"/>
    </source>
</evidence>
<evidence type="ECO:0000250" key="2">
    <source>
        <dbReference type="UniProtKB" id="Q89907"/>
    </source>
</evidence>
<evidence type="ECO:0000305" key="3"/>
<accession>P0CAE9</accession>
<name>RPB7_ASFWA</name>